<evidence type="ECO:0000255" key="1">
    <source>
        <dbReference type="HAMAP-Rule" id="MF_00321"/>
    </source>
</evidence>
<reference key="1">
    <citation type="journal article" date="2004" name="Genome Res.">
        <title>Genome sequence of Haloarcula marismortui: a halophilic archaeon from the Dead Sea.</title>
        <authorList>
            <person name="Baliga N.S."/>
            <person name="Bonneau R."/>
            <person name="Facciotti M.T."/>
            <person name="Pan M."/>
            <person name="Glusman G."/>
            <person name="Deutsch E.W."/>
            <person name="Shannon P."/>
            <person name="Chiu Y."/>
            <person name="Weng R.S."/>
            <person name="Gan R.R."/>
            <person name="Hung P."/>
            <person name="Date S.V."/>
            <person name="Marcotte E."/>
            <person name="Hood L."/>
            <person name="Ng W.V."/>
        </authorList>
    </citation>
    <scope>NUCLEOTIDE SEQUENCE [LARGE SCALE GENOMIC DNA]</scope>
    <source>
        <strain>ATCC 43049 / DSM 3752 / JCM 8966 / VKM B-1809</strain>
    </source>
</reference>
<accession>Q5UZW0</accession>
<proteinExistence type="inferred from homology"/>
<keyword id="KW-0131">Cell cycle</keyword>
<keyword id="KW-0132">Cell division</keyword>
<keyword id="KW-0342">GTP-binding</keyword>
<keyword id="KW-0460">Magnesium</keyword>
<keyword id="KW-0479">Metal-binding</keyword>
<keyword id="KW-0547">Nucleotide-binding</keyword>
<keyword id="KW-1185">Reference proteome</keyword>
<keyword id="KW-0717">Septation</keyword>
<sequence>MFESRPDRDAEVVLIGRSNVGKSTLMREITGHTFDTGQRPGVTRSPNHFDWASADFVISDLPGFGFMKGVPEDVREEIKTDVVQYVERNAEHILVGILVVDGKSVIDIIDRHSGPDEIPHDVEMFHFLREVGVEPVVAVNKMDKVDDKDARLNELCDRLGLHPPWQQWQETIAPISAKHGSTEPLNEAVRHHLHEVQRDDLFQFF</sequence>
<organism>
    <name type="scientific">Haloarcula marismortui (strain ATCC 43049 / DSM 3752 / JCM 8966 / VKM B-1809)</name>
    <name type="common">Halobacterium marismortui</name>
    <dbReference type="NCBI Taxonomy" id="272569"/>
    <lineage>
        <taxon>Archaea</taxon>
        <taxon>Methanobacteriati</taxon>
        <taxon>Methanobacteriota</taxon>
        <taxon>Stenosarchaea group</taxon>
        <taxon>Halobacteria</taxon>
        <taxon>Halobacteriales</taxon>
        <taxon>Haloarculaceae</taxon>
        <taxon>Haloarcula</taxon>
    </lineage>
</organism>
<name>ENGB_HALMA</name>
<feature type="chain" id="PRO_0000266986" description="Probable GTP-binding protein EngB">
    <location>
        <begin position="1"/>
        <end position="205"/>
    </location>
</feature>
<feature type="domain" description="EngB-type G" evidence="1">
    <location>
        <begin position="8"/>
        <end position="195"/>
    </location>
</feature>
<feature type="binding site" evidence="1">
    <location>
        <begin position="16"/>
        <end position="23"/>
    </location>
    <ligand>
        <name>GTP</name>
        <dbReference type="ChEBI" id="CHEBI:37565"/>
    </ligand>
</feature>
<feature type="binding site" evidence="1">
    <location>
        <position position="23"/>
    </location>
    <ligand>
        <name>Mg(2+)</name>
        <dbReference type="ChEBI" id="CHEBI:18420"/>
    </ligand>
</feature>
<feature type="binding site" evidence="1">
    <location>
        <begin position="41"/>
        <end position="45"/>
    </location>
    <ligand>
        <name>GTP</name>
        <dbReference type="ChEBI" id="CHEBI:37565"/>
    </ligand>
</feature>
<feature type="binding site" evidence="1">
    <location>
        <position position="43"/>
    </location>
    <ligand>
        <name>Mg(2+)</name>
        <dbReference type="ChEBI" id="CHEBI:18420"/>
    </ligand>
</feature>
<feature type="binding site" evidence="1">
    <location>
        <begin position="60"/>
        <end position="63"/>
    </location>
    <ligand>
        <name>GTP</name>
        <dbReference type="ChEBI" id="CHEBI:37565"/>
    </ligand>
</feature>
<feature type="binding site" evidence="1">
    <location>
        <begin position="140"/>
        <end position="143"/>
    </location>
    <ligand>
        <name>GTP</name>
        <dbReference type="ChEBI" id="CHEBI:37565"/>
    </ligand>
</feature>
<feature type="binding site" evidence="1">
    <location>
        <begin position="175"/>
        <end position="177"/>
    </location>
    <ligand>
        <name>GTP</name>
        <dbReference type="ChEBI" id="CHEBI:37565"/>
    </ligand>
</feature>
<protein>
    <recommendedName>
        <fullName evidence="1">Probable GTP-binding protein EngB</fullName>
    </recommendedName>
</protein>
<dbReference type="EMBL" id="AY596297">
    <property type="protein sequence ID" value="AAV47193.1"/>
    <property type="molecule type" value="Genomic_DNA"/>
</dbReference>
<dbReference type="RefSeq" id="WP_011224188.1">
    <property type="nucleotide sequence ID" value="NC_006396.1"/>
</dbReference>
<dbReference type="SMR" id="Q5UZW0"/>
<dbReference type="STRING" id="272569.rrnAC2378"/>
<dbReference type="PaxDb" id="272569-rrnAC2378"/>
<dbReference type="EnsemblBacteria" id="AAV47193">
    <property type="protein sequence ID" value="AAV47193"/>
    <property type="gene ID" value="rrnAC2378"/>
</dbReference>
<dbReference type="GeneID" id="40153271"/>
<dbReference type="KEGG" id="hma:rrnAC2378"/>
<dbReference type="PATRIC" id="fig|272569.17.peg.2993"/>
<dbReference type="eggNOG" id="arCOG00355">
    <property type="taxonomic scope" value="Archaea"/>
</dbReference>
<dbReference type="HOGENOM" id="CLU_033732_3_0_2"/>
<dbReference type="Proteomes" id="UP000001169">
    <property type="component" value="Chromosome I"/>
</dbReference>
<dbReference type="GO" id="GO:0005525">
    <property type="term" value="F:GTP binding"/>
    <property type="evidence" value="ECO:0007669"/>
    <property type="project" value="UniProtKB-UniRule"/>
</dbReference>
<dbReference type="GO" id="GO:0046872">
    <property type="term" value="F:metal ion binding"/>
    <property type="evidence" value="ECO:0007669"/>
    <property type="project" value="UniProtKB-KW"/>
</dbReference>
<dbReference type="GO" id="GO:0051301">
    <property type="term" value="P:cell division"/>
    <property type="evidence" value="ECO:0007669"/>
    <property type="project" value="UniProtKB-KW"/>
</dbReference>
<dbReference type="CDD" id="cd01876">
    <property type="entry name" value="YihA_EngB"/>
    <property type="match status" value="1"/>
</dbReference>
<dbReference type="Gene3D" id="3.40.50.300">
    <property type="entry name" value="P-loop containing nucleotide triphosphate hydrolases"/>
    <property type="match status" value="1"/>
</dbReference>
<dbReference type="HAMAP" id="MF_00321">
    <property type="entry name" value="GTPase_EngB"/>
    <property type="match status" value="1"/>
</dbReference>
<dbReference type="InterPro" id="IPR030393">
    <property type="entry name" value="G_ENGB_dom"/>
</dbReference>
<dbReference type="InterPro" id="IPR006073">
    <property type="entry name" value="GTP-bd"/>
</dbReference>
<dbReference type="InterPro" id="IPR019987">
    <property type="entry name" value="GTP-bd_ribosome_bio_YsxC"/>
</dbReference>
<dbReference type="InterPro" id="IPR027417">
    <property type="entry name" value="P-loop_NTPase"/>
</dbReference>
<dbReference type="InterPro" id="IPR005225">
    <property type="entry name" value="Small_GTP-bd"/>
</dbReference>
<dbReference type="NCBIfam" id="NF003255">
    <property type="entry name" value="PRK04213.1"/>
    <property type="match status" value="1"/>
</dbReference>
<dbReference type="NCBIfam" id="TIGR00231">
    <property type="entry name" value="small_GTP"/>
    <property type="match status" value="1"/>
</dbReference>
<dbReference type="PANTHER" id="PTHR11649:SF13">
    <property type="entry name" value="ENGB-TYPE G DOMAIN-CONTAINING PROTEIN"/>
    <property type="match status" value="1"/>
</dbReference>
<dbReference type="PANTHER" id="PTHR11649">
    <property type="entry name" value="MSS1/TRME-RELATED GTP-BINDING PROTEIN"/>
    <property type="match status" value="1"/>
</dbReference>
<dbReference type="Pfam" id="PF01926">
    <property type="entry name" value="MMR_HSR1"/>
    <property type="match status" value="1"/>
</dbReference>
<dbReference type="SUPFAM" id="SSF52540">
    <property type="entry name" value="P-loop containing nucleoside triphosphate hydrolases"/>
    <property type="match status" value="1"/>
</dbReference>
<dbReference type="PROSITE" id="PS51706">
    <property type="entry name" value="G_ENGB"/>
    <property type="match status" value="1"/>
</dbReference>
<gene>
    <name evidence="1" type="primary">engB</name>
    <name type="ordered locus">rrnAC2378</name>
</gene>
<comment type="function">
    <text evidence="1">Necessary for normal cell division and for the maintenance of normal septation.</text>
</comment>
<comment type="cofactor">
    <cofactor evidence="1">
        <name>Mg(2+)</name>
        <dbReference type="ChEBI" id="CHEBI:18420"/>
    </cofactor>
</comment>
<comment type="similarity">
    <text evidence="1">Belongs to the TRAFAC class TrmE-Era-EngA-EngB-Septin-like GTPase superfamily. EngB GTPase family.</text>
</comment>